<comment type="function">
    <text evidence="1">Involved in the import of serine and threonine into the cell, with the concomitant import of sodium (symport system).</text>
</comment>
<comment type="catalytic activity">
    <reaction evidence="1">
        <text>L-serine(in) + Na(+)(in) = L-serine(out) + Na(+)(out)</text>
        <dbReference type="Rhea" id="RHEA:29575"/>
        <dbReference type="ChEBI" id="CHEBI:29101"/>
        <dbReference type="ChEBI" id="CHEBI:33384"/>
    </reaction>
    <physiologicalReaction direction="right-to-left" evidence="1">
        <dbReference type="Rhea" id="RHEA:29577"/>
    </physiologicalReaction>
</comment>
<comment type="catalytic activity">
    <reaction evidence="1">
        <text>L-threonine(in) + Na(+)(in) = L-threonine(out) + Na(+)(out)</text>
        <dbReference type="Rhea" id="RHEA:69999"/>
        <dbReference type="ChEBI" id="CHEBI:29101"/>
        <dbReference type="ChEBI" id="CHEBI:57926"/>
    </reaction>
    <physiologicalReaction direction="right-to-left" evidence="1">
        <dbReference type="Rhea" id="RHEA:70001"/>
    </physiologicalReaction>
</comment>
<comment type="subcellular location">
    <subcellularLocation>
        <location evidence="1">Cell inner membrane</location>
        <topology evidence="1">Multi-pass membrane protein</topology>
    </subcellularLocation>
</comment>
<comment type="similarity">
    <text evidence="1">Belongs to the dicarboxylate/amino acid:cation symporter (DAACS) (TC 2.A.23) family.</text>
</comment>
<protein>
    <recommendedName>
        <fullName evidence="1">Serine/threonine transporter SstT</fullName>
    </recommendedName>
    <alternativeName>
        <fullName evidence="1">Na(+)/serine-threonine symporter</fullName>
    </alternativeName>
</protein>
<proteinExistence type="inferred from homology"/>
<name>SSTT_ACTP2</name>
<accession>A3N0C9</accession>
<feature type="chain" id="PRO_0000309072" description="Serine/threonine transporter SstT">
    <location>
        <begin position="1"/>
        <end position="404"/>
    </location>
</feature>
<feature type="transmembrane region" description="Helical" evidence="1">
    <location>
        <begin position="12"/>
        <end position="32"/>
    </location>
</feature>
<feature type="transmembrane region" description="Helical" evidence="1">
    <location>
        <begin position="53"/>
        <end position="73"/>
    </location>
</feature>
<feature type="transmembrane region" description="Helical" evidence="1">
    <location>
        <begin position="81"/>
        <end position="101"/>
    </location>
</feature>
<feature type="transmembrane region" description="Helical" evidence="1">
    <location>
        <begin position="140"/>
        <end position="160"/>
    </location>
</feature>
<feature type="transmembrane region" description="Helical" evidence="1">
    <location>
        <begin position="177"/>
        <end position="197"/>
    </location>
</feature>
<feature type="transmembrane region" description="Helical" evidence="1">
    <location>
        <begin position="216"/>
        <end position="236"/>
    </location>
</feature>
<feature type="transmembrane region" description="Helical" evidence="1">
    <location>
        <begin position="287"/>
        <end position="307"/>
    </location>
</feature>
<feature type="transmembrane region" description="Helical" evidence="1">
    <location>
        <begin position="329"/>
        <end position="349"/>
    </location>
</feature>
<feature type="transmembrane region" description="Helical" evidence="1">
    <location>
        <begin position="356"/>
        <end position="376"/>
    </location>
</feature>
<organism>
    <name type="scientific">Actinobacillus pleuropneumoniae serotype 5b (strain L20)</name>
    <dbReference type="NCBI Taxonomy" id="416269"/>
    <lineage>
        <taxon>Bacteria</taxon>
        <taxon>Pseudomonadati</taxon>
        <taxon>Pseudomonadota</taxon>
        <taxon>Gammaproteobacteria</taxon>
        <taxon>Pasteurellales</taxon>
        <taxon>Pasteurellaceae</taxon>
        <taxon>Actinobacillus</taxon>
    </lineage>
</organism>
<sequence length="404" mass="41870">MSNPSLSSKLLGGNLVLRIAIGLVLGACLALVNPDWAKNVGVLGQFFVKSLRAIAPILVFVLVLSAIANKEVGSDSKLKPILVMYVLGTFVAALTAVVLSFMFPTTLELVSNPDNLNPPQGIGEIIKTVVFNLVDNPLQALANANFIGILAWAIGLGIALRHAAPSTKTFLNDFAEAVSFVVKVVIAFAPIGVFGLVAETIATNGADAFVGYARLLGVLLGAMVIVAFVLNPLIVFWKIRRNPYPLTLTCLRESGVTAFFTRSSAANIPVNMNLAKRLGVRDEIASVAIPLGATINMAGAAITVTVLTLAAAYTQGIQPDFATALLLSIVASVCACGASGVAGGSLLLIPLACSLFNIPNDIAAQVIGVGFIIGVIQDSAETALNSSTDVLFTAAVSQAEDQKA</sequence>
<keyword id="KW-0029">Amino-acid transport</keyword>
<keyword id="KW-0997">Cell inner membrane</keyword>
<keyword id="KW-1003">Cell membrane</keyword>
<keyword id="KW-0472">Membrane</keyword>
<keyword id="KW-1185">Reference proteome</keyword>
<keyword id="KW-0769">Symport</keyword>
<keyword id="KW-0812">Transmembrane</keyword>
<keyword id="KW-1133">Transmembrane helix</keyword>
<keyword id="KW-0813">Transport</keyword>
<dbReference type="EMBL" id="CP000569">
    <property type="protein sequence ID" value="ABN73865.1"/>
    <property type="molecule type" value="Genomic_DNA"/>
</dbReference>
<dbReference type="RefSeq" id="WP_005597199.1">
    <property type="nucleotide sequence ID" value="NC_009053.1"/>
</dbReference>
<dbReference type="SMR" id="A3N0C9"/>
<dbReference type="STRING" id="416269.APL_0767"/>
<dbReference type="EnsemblBacteria" id="ABN73865">
    <property type="protein sequence ID" value="ABN73865"/>
    <property type="gene ID" value="APL_0767"/>
</dbReference>
<dbReference type="GeneID" id="48598950"/>
<dbReference type="KEGG" id="apl:APL_0767"/>
<dbReference type="eggNOG" id="COG3633">
    <property type="taxonomic scope" value="Bacteria"/>
</dbReference>
<dbReference type="HOGENOM" id="CLU_044581_0_0_6"/>
<dbReference type="Proteomes" id="UP000001432">
    <property type="component" value="Chromosome"/>
</dbReference>
<dbReference type="GO" id="GO:0005886">
    <property type="term" value="C:plasma membrane"/>
    <property type="evidence" value="ECO:0007669"/>
    <property type="project" value="UniProtKB-SubCell"/>
</dbReference>
<dbReference type="GO" id="GO:0005295">
    <property type="term" value="F:neutral L-amino acid:sodium symporter activity"/>
    <property type="evidence" value="ECO:0007669"/>
    <property type="project" value="TreeGrafter"/>
</dbReference>
<dbReference type="GO" id="GO:0032329">
    <property type="term" value="P:serine transport"/>
    <property type="evidence" value="ECO:0007669"/>
    <property type="project" value="InterPro"/>
</dbReference>
<dbReference type="GO" id="GO:0015826">
    <property type="term" value="P:threonine transport"/>
    <property type="evidence" value="ECO:0007669"/>
    <property type="project" value="InterPro"/>
</dbReference>
<dbReference type="FunFam" id="1.10.3860.10:FF:000003">
    <property type="entry name" value="Serine/threonine transporter sstT"/>
    <property type="match status" value="1"/>
</dbReference>
<dbReference type="Gene3D" id="1.10.3860.10">
    <property type="entry name" value="Sodium:dicarboxylate symporter"/>
    <property type="match status" value="1"/>
</dbReference>
<dbReference type="HAMAP" id="MF_01582">
    <property type="entry name" value="Ser_Thr_transp_SstT"/>
    <property type="match status" value="1"/>
</dbReference>
<dbReference type="InterPro" id="IPR001991">
    <property type="entry name" value="Na-dicarboxylate_symporter"/>
</dbReference>
<dbReference type="InterPro" id="IPR036458">
    <property type="entry name" value="Na:dicarbo_symporter_sf"/>
</dbReference>
<dbReference type="InterPro" id="IPR023025">
    <property type="entry name" value="Ser_Thr_transp_SstT"/>
</dbReference>
<dbReference type="NCBIfam" id="NF010151">
    <property type="entry name" value="PRK13628.1"/>
    <property type="match status" value="1"/>
</dbReference>
<dbReference type="PANTHER" id="PTHR42865">
    <property type="entry name" value="PROTON/GLUTAMATE-ASPARTATE SYMPORTER"/>
    <property type="match status" value="1"/>
</dbReference>
<dbReference type="PANTHER" id="PTHR42865:SF8">
    <property type="entry name" value="SERINE_THREONINE TRANSPORTER SSTT"/>
    <property type="match status" value="1"/>
</dbReference>
<dbReference type="Pfam" id="PF00375">
    <property type="entry name" value="SDF"/>
    <property type="match status" value="1"/>
</dbReference>
<dbReference type="PRINTS" id="PR00173">
    <property type="entry name" value="EDTRNSPORT"/>
</dbReference>
<dbReference type="SUPFAM" id="SSF118215">
    <property type="entry name" value="Proton glutamate symport protein"/>
    <property type="match status" value="1"/>
</dbReference>
<reference key="1">
    <citation type="journal article" date="2008" name="J. Bacteriol.">
        <title>The complete genome sequence of Actinobacillus pleuropneumoniae L20 (serotype 5b).</title>
        <authorList>
            <person name="Foote S.J."/>
            <person name="Bosse J.T."/>
            <person name="Bouevitch A.B."/>
            <person name="Langford P.R."/>
            <person name="Young N.M."/>
            <person name="Nash J.H.E."/>
        </authorList>
    </citation>
    <scope>NUCLEOTIDE SEQUENCE [LARGE SCALE GENOMIC DNA]</scope>
    <source>
        <strain>L20</strain>
    </source>
</reference>
<gene>
    <name evidence="1" type="primary">sstT</name>
    <name type="ordered locus">APL_0767</name>
</gene>
<evidence type="ECO:0000255" key="1">
    <source>
        <dbReference type="HAMAP-Rule" id="MF_01582"/>
    </source>
</evidence>